<protein>
    <recommendedName>
        <fullName>Gas vesicle protein C</fullName>
        <shortName evidence="7">GvpC</shortName>
    </recommendedName>
</protein>
<sequence length="381" mass="42654">MSVKDKREKMTATREEFAEVQQAFAAYADEFAADVDDKRDVSELVDGIDTLRTEMNSTNDAFRAYSEEFAADVEHFHTSVADRRDAFDAYADIFATDVAEMQDVSDLLAAIDDLRAEMDETHEAFDAYADAFVTDVATLRDVSDLLTAISELQSEFVSVQGEFNGYASEFGADIDQFHAVVAEKRDGHKDVADAFLQYREEFHGVEVQSLLDNIAAFQREMGDYRKAFETTEEAFASFARDFYGQGAAPMATPLNNAAETAVTGTETEVDIPPIEDSVEPDGEDEDSKADDVEAEAEVETVEMEFGAEMDTEADEDVQSESVREDDQFLDDETPEDMVQCLVCGEYYQAITEPHLQTHDMTIKKYREEYGEDVPLRPDDKA</sequence>
<reference key="1">
    <citation type="journal article" date="1992" name="J. Mol. Biol.">
        <title>Three different but related gene clusters encoding gas vesicles in halophilic archaea.</title>
        <authorList>
            <person name="Englert C."/>
            <person name="Krueger K."/>
            <person name="Offner S."/>
            <person name="Pfeifer F."/>
        </authorList>
    </citation>
    <scope>NUCLEOTIDE SEQUENCE [GENOMIC DNA]</scope>
    <scope>GAS VESICLE GENE CLUSTER</scope>
    <source>
        <strain>ATCC 33500 / DSM 1411 / JCM 8866 / NBRC 14739 / NCIMB 2177 / R-4</strain>
    </source>
</reference>
<reference key="2">
    <citation type="journal article" date="2012" name="J. Bacteriol.">
        <title>Complete genome sequence of the metabolically versatile halophilic archaeon Haloferax mediterranei, a poly(3-hydroxybutyrate-co-3-hydroxyvalerate) producer.</title>
        <authorList>
            <person name="Han J."/>
            <person name="Zhang F."/>
            <person name="Hou J."/>
            <person name="Liu X."/>
            <person name="Li M."/>
            <person name="Liu H."/>
            <person name="Cai L."/>
            <person name="Zhang B."/>
            <person name="Chen Y."/>
            <person name="Zhou J."/>
            <person name="Hu S."/>
            <person name="Xiang H."/>
        </authorList>
    </citation>
    <scope>NUCLEOTIDE SEQUENCE [LARGE SCALE GENOMIC DNA]</scope>
    <source>
        <strain>ATCC 33500 / DSM 1411 / JCM 8866 / NBRC 14739 / NCIMB 2177 / R-4</strain>
    </source>
</reference>
<reference key="3">
    <citation type="journal article" date="1993" name="J. Biol. Chem.">
        <title>Analysis of gas vesicle gene expression in Haloferax mediterranei reveals that GvpA and GvpC are both gas vesicle structural proteins.</title>
        <authorList>
            <person name="Englert C."/>
            <person name="Pfeifer F."/>
        </authorList>
    </citation>
    <scope>SUBCELLULAR LOCATION</scope>
    <scope>INDUCTION</scope>
    <scope>TWO PROTEIN FORMS</scope>
</reference>
<reference key="4">
    <citation type="journal article" date="1996" name="Microbiology">
        <title>Influence of salt on the transcription of the gas-vesicle genes of Haloferax mediterranei and identification of the endogenous transcriptional activator gene.</title>
        <authorList>
            <person name="Roeder R."/>
            <person name="Pfeifer F."/>
        </authorList>
    </citation>
    <scope>INDUCTION BY SALT</scope>
    <source>
        <strain>ATCC 33500 / DSM 1411 / JCM 8866 / NBRC 14739 / NCIMB 2177 / R-4</strain>
    </source>
</reference>
<reference key="5">
    <citation type="journal article" date="2011" name="Mol. Microbiol.">
        <title>Structural model of the gas vesicle protein GvpA and analysis of GvpA mutants in vivo.</title>
        <authorList>
            <person name="Strunk T."/>
            <person name="Hamacher K."/>
            <person name="Hoffgaard F."/>
            <person name="Engelhardt H."/>
            <person name="Zillig M.D."/>
            <person name="Faist K."/>
            <person name="Wenzel W."/>
            <person name="Pfeifer F."/>
        </authorList>
    </citation>
    <scope>SUBCELLULAR LOCATION</scope>
</reference>
<accession>Q02228</accession>
<accession>I3R591</accession>
<keyword id="KW-0304">Gas vesicle</keyword>
<keyword id="KW-0677">Repeat</keyword>
<evidence type="ECO:0000250" key="1">
    <source>
        <dbReference type="UniProtKB" id="P24574"/>
    </source>
</evidence>
<evidence type="ECO:0000256" key="2">
    <source>
        <dbReference type="SAM" id="MobiDB-lite"/>
    </source>
</evidence>
<evidence type="ECO:0000269" key="3">
    <source>
    </source>
</evidence>
<evidence type="ECO:0000269" key="4">
    <source>
    </source>
</evidence>
<evidence type="ECO:0000269" key="5">
    <source>
    </source>
</evidence>
<evidence type="ECO:0000269" key="6">
    <source>
    </source>
</evidence>
<evidence type="ECO:0000303" key="7">
    <source>
    </source>
</evidence>
<evidence type="ECO:0000305" key="8"/>
<evidence type="ECO:0000305" key="9">
    <source>
    </source>
</evidence>
<evidence type="ECO:0000305" key="10">
    <source>
    </source>
</evidence>
<evidence type="ECO:0000305" key="11">
    <source>
    </source>
</evidence>
<proteinExistence type="evidence at transcript level"/>
<gene>
    <name evidence="7" type="primary">gvpC</name>
    <name type="ordered locus">HFX_1695</name>
</gene>
<organism>
    <name type="scientific">Haloferax mediterranei (strain ATCC 33500 / DSM 1411 / JCM 8866 / NBRC 14739 / NCIMB 2177 / R-4)</name>
    <name type="common">Halobacterium mediterranei</name>
    <dbReference type="NCBI Taxonomy" id="523841"/>
    <lineage>
        <taxon>Archaea</taxon>
        <taxon>Methanobacteriati</taxon>
        <taxon>Methanobacteriota</taxon>
        <taxon>Stenosarchaea group</taxon>
        <taxon>Halobacteria</taxon>
        <taxon>Halobacteriales</taxon>
        <taxon>Haloferacaceae</taxon>
        <taxon>Haloferax</taxon>
    </lineage>
</organism>
<name>GVPC_HALMT</name>
<comment type="function">
    <text evidence="1">Confers stability, involved in shaping gas vesicles (GV), hollow, gas filled proteinaceous nanostructures found in some microorganisms. They allow positioning of halobacteria at the optimal depth for growth in the poorly aerated, shallow brine pools of their habitat.</text>
</comment>
<comment type="function">
    <text evidence="3 6">Expression of a 9.5 kb mc-vac DNA fragment containing 2 divergently transcribed regions (gvpD-gvpE-gvpF-gvpG-gvpH-gvpI-gvpJ-gvpK-gvpL-gvpM and gvpA-gvpC-gvpN-gvpO) allows H.volcanii to produce gas vesicles.</text>
</comment>
<comment type="subcellular location">
    <subcellularLocation>
        <location evidence="4 5">Gas vesicle</location>
    </subcellularLocation>
    <text evidence="10 11">Present at much lower levels than GvpA (Probable). Binds to the external surface of the gas vesicle (Probable).</text>
</comment>
<comment type="induction">
    <text evidence="5 6">Expressed from a single promoter upstream of gvpA; most transcripts stop at the gvpA terminator, with low read-through into downstream gvpC-gvpN-gvpO. Expression starts in early stationary phase and is maximal in stationary phase (PubMed:7683649, PubMed:8757736). Highly expressed in 25% salt, poorly expressed in 15% salt, no gas vesicles are formed at 15% salt (PubMed:8757736).</text>
</comment>
<comment type="PTM">
    <text evidence="5">Detected as 2 slightly different sizes in vivo; the proteins appears larger in SDS-PAGE probably due to the acidic tail.</text>
</comment>
<comment type="miscellaneous">
    <text evidence="3">Encoded in a 14-gene locus called mc-vac.</text>
</comment>
<comment type="similarity">
    <text evidence="8">Belongs to the halobacterial gas vesicle GvpC family.</text>
</comment>
<dbReference type="EMBL" id="X64701">
    <property type="protein sequence ID" value="CAA45944.1"/>
    <property type="molecule type" value="Genomic_DNA"/>
</dbReference>
<dbReference type="EMBL" id="CP001868">
    <property type="protein sequence ID" value="AFK19401.1"/>
    <property type="molecule type" value="Genomic_DNA"/>
</dbReference>
<dbReference type="PIR" id="S28115">
    <property type="entry name" value="S28115"/>
</dbReference>
<dbReference type="RefSeq" id="WP_004056707.1">
    <property type="nucleotide sequence ID" value="NC_017941.2"/>
</dbReference>
<dbReference type="SMR" id="Q02228"/>
<dbReference type="STRING" id="523841.HFX_1695"/>
<dbReference type="PaxDb" id="523841-HFX_1695"/>
<dbReference type="GeneID" id="40157050"/>
<dbReference type="KEGG" id="hme:HFX_1695"/>
<dbReference type="eggNOG" id="arCOG06392">
    <property type="taxonomic scope" value="Archaea"/>
</dbReference>
<dbReference type="HOGENOM" id="CLU_060058_0_0_2"/>
<dbReference type="OrthoDB" id="275706at2157"/>
<dbReference type="Proteomes" id="UP000006469">
    <property type="component" value="Chromosome"/>
</dbReference>
<dbReference type="GO" id="GO:0031411">
    <property type="term" value="C:gas vesicle"/>
    <property type="evidence" value="ECO:0007669"/>
    <property type="project" value="UniProtKB-SubCell"/>
</dbReference>
<dbReference type="GO" id="GO:0003677">
    <property type="term" value="F:DNA binding"/>
    <property type="evidence" value="ECO:0007669"/>
    <property type="project" value="InterPro"/>
</dbReference>
<dbReference type="GO" id="GO:0008270">
    <property type="term" value="F:zinc ion binding"/>
    <property type="evidence" value="ECO:0007669"/>
    <property type="project" value="InterPro"/>
</dbReference>
<dbReference type="GO" id="GO:0031412">
    <property type="term" value="P:gas vesicle organization"/>
    <property type="evidence" value="ECO:0007669"/>
    <property type="project" value="InterPro"/>
</dbReference>
<dbReference type="GO" id="GO:0006355">
    <property type="term" value="P:regulation of DNA-templated transcription"/>
    <property type="evidence" value="ECO:0007669"/>
    <property type="project" value="InterPro"/>
</dbReference>
<dbReference type="Gene3D" id="1.10.10.1550">
    <property type="entry name" value="ROS/MUCR transcriptional regulator protein"/>
    <property type="match status" value="1"/>
</dbReference>
<dbReference type="InterPro" id="IPR008639">
    <property type="entry name" value="Gas-vesicle_GvpC_halobac"/>
</dbReference>
<dbReference type="InterPro" id="IPR041920">
    <property type="entry name" value="ROS/MUCR_sf"/>
</dbReference>
<dbReference type="InterPro" id="IPR008807">
    <property type="entry name" value="ROS_MUCR"/>
</dbReference>
<dbReference type="Pfam" id="PF05465">
    <property type="entry name" value="Halo_GVPC"/>
    <property type="match status" value="5"/>
</dbReference>
<dbReference type="Pfam" id="PF05443">
    <property type="entry name" value="ROS_MUCR"/>
    <property type="match status" value="1"/>
</dbReference>
<feature type="chain" id="PRO_0000182671" description="Gas vesicle protein C">
    <location>
        <begin position="1"/>
        <end position="381"/>
    </location>
</feature>
<feature type="repeat" description="1" evidence="9">
    <location>
        <begin position="22"/>
        <end position="59"/>
    </location>
</feature>
<feature type="repeat" description="2" evidence="9">
    <location>
        <begin position="60"/>
        <end position="84"/>
    </location>
</feature>
<feature type="repeat" description="3" evidence="9">
    <location>
        <begin position="85"/>
        <end position="122"/>
    </location>
</feature>
<feature type="repeat" description="4" evidence="9">
    <location>
        <begin position="123"/>
        <end position="160"/>
    </location>
</feature>
<feature type="repeat" description="5" evidence="9">
    <location>
        <begin position="161"/>
        <end position="192"/>
    </location>
</feature>
<feature type="repeat" description="6" evidence="9">
    <location>
        <begin position="193"/>
        <end position="232"/>
    </location>
</feature>
<feature type="repeat" description="7" evidence="9">
    <location>
        <begin position="233"/>
        <end position="274"/>
    </location>
</feature>
<feature type="region of interest" description="7 X approximate tandem repeats" evidence="9">
    <location>
        <begin position="22"/>
        <end position="274"/>
    </location>
</feature>
<feature type="region of interest" description="Disordered" evidence="2">
    <location>
        <begin position="261"/>
        <end position="333"/>
    </location>
</feature>
<feature type="compositionally biased region" description="Acidic residues" evidence="2">
    <location>
        <begin position="276"/>
        <end position="318"/>
    </location>
</feature>